<sequence>MVCVPSSSSVMELANLISQSIPKLQDESPQRANDARGNVIEACSKMLALVTSPAEMLKEMVLINLASLQVINHYQIASVVPLNGHIPISELANKCGLPVDILRRILRQAMTYGAFSEPEPDCIAQTDVSREIPRLSPLLTYQLDVCLPSMVRLLDWLKDVDGEHACAYQIAHDTKDTWWSYASKRPELIENYGKYMALITSGGAHDVSYVLKGFAWEKLGNAVVVDVGGADGFVGISLAKEYPNLAVIVEDNLGLKDSADDNIPQHLKSRVVFLPHSFFKPQSALSRDADVFLLRHILHDWNDNDCRAILQALAASMKPGASILVAEQILQRPGAASWQRERVMRALDMQMMIQFGSKERAYEDWDALFKSVDPPLEIVDCVQPVGSADSFMELKRRA</sequence>
<proteinExistence type="evidence at transcript level"/>
<keyword id="KW-0489">Methyltransferase</keyword>
<keyword id="KW-1185">Reference proteome</keyword>
<keyword id="KW-0949">S-adenosyl-L-methionine</keyword>
<keyword id="KW-0808">Transferase</keyword>
<name>AOIO_ASPOR</name>
<dbReference type="EC" id="2.1.1.-" evidence="2"/>
<dbReference type="EMBL" id="AP007175">
    <property type="protein sequence ID" value="BAE65972.1"/>
    <property type="molecule type" value="Genomic_DNA"/>
</dbReference>
<dbReference type="STRING" id="510516.Q2TXQ1"/>
<dbReference type="EnsemblFungi" id="BAE65972">
    <property type="protein sequence ID" value="BAE65972"/>
    <property type="gene ID" value="AO090010000056"/>
</dbReference>
<dbReference type="VEuPathDB" id="FungiDB:AO090010000056"/>
<dbReference type="HOGENOM" id="CLU_005533_1_4_1"/>
<dbReference type="OMA" id="MIQFGSK"/>
<dbReference type="OrthoDB" id="387446at2759"/>
<dbReference type="Proteomes" id="UP000006564">
    <property type="component" value="Chromosome 8"/>
</dbReference>
<dbReference type="GO" id="GO:0008171">
    <property type="term" value="F:O-methyltransferase activity"/>
    <property type="evidence" value="ECO:0007669"/>
    <property type="project" value="InterPro"/>
</dbReference>
<dbReference type="GO" id="GO:0032259">
    <property type="term" value="P:methylation"/>
    <property type="evidence" value="ECO:0007669"/>
    <property type="project" value="UniProtKB-KW"/>
</dbReference>
<dbReference type="GO" id="GO:0030639">
    <property type="term" value="P:polyketide biosynthetic process"/>
    <property type="evidence" value="ECO:0000317"/>
    <property type="project" value="AspGD"/>
</dbReference>
<dbReference type="CDD" id="cd02440">
    <property type="entry name" value="AdoMet_MTases"/>
    <property type="match status" value="1"/>
</dbReference>
<dbReference type="FunFam" id="3.40.50.150:FF:000706">
    <property type="entry name" value="O-methyltransferase"/>
    <property type="match status" value="1"/>
</dbReference>
<dbReference type="Gene3D" id="3.40.50.150">
    <property type="entry name" value="Vaccinia Virus protein VP39"/>
    <property type="match status" value="1"/>
</dbReference>
<dbReference type="Gene3D" id="1.10.10.10">
    <property type="entry name" value="Winged helix-like DNA-binding domain superfamily/Winged helix DNA-binding domain"/>
    <property type="match status" value="1"/>
</dbReference>
<dbReference type="InterPro" id="IPR016461">
    <property type="entry name" value="COMT-like"/>
</dbReference>
<dbReference type="InterPro" id="IPR001077">
    <property type="entry name" value="O_MeTrfase_dom"/>
</dbReference>
<dbReference type="InterPro" id="IPR029063">
    <property type="entry name" value="SAM-dependent_MTases_sf"/>
</dbReference>
<dbReference type="InterPro" id="IPR036388">
    <property type="entry name" value="WH-like_DNA-bd_sf"/>
</dbReference>
<dbReference type="InterPro" id="IPR036390">
    <property type="entry name" value="WH_DNA-bd_sf"/>
</dbReference>
<dbReference type="PANTHER" id="PTHR43712:SF5">
    <property type="entry name" value="O-METHYLTRANSFERASE ASQN-RELATED"/>
    <property type="match status" value="1"/>
</dbReference>
<dbReference type="PANTHER" id="PTHR43712">
    <property type="entry name" value="PUTATIVE (AFU_ORTHOLOGUE AFUA_4G14580)-RELATED"/>
    <property type="match status" value="1"/>
</dbReference>
<dbReference type="Pfam" id="PF00891">
    <property type="entry name" value="Methyltransf_2"/>
    <property type="match status" value="1"/>
</dbReference>
<dbReference type="SUPFAM" id="SSF53335">
    <property type="entry name" value="S-adenosyl-L-methionine-dependent methyltransferases"/>
    <property type="match status" value="1"/>
</dbReference>
<dbReference type="SUPFAM" id="SSF46785">
    <property type="entry name" value="Winged helix' DNA-binding domain"/>
    <property type="match status" value="1"/>
</dbReference>
<dbReference type="PROSITE" id="PS51683">
    <property type="entry name" value="SAM_OMT_II"/>
    <property type="match status" value="1"/>
</dbReference>
<accession>Q2TXQ1</accession>
<protein>
    <recommendedName>
        <fullName evidence="3">O-methyltransferase aoiO</fullName>
        <ecNumber evidence="2">2.1.1.-</ecNumber>
    </recommendedName>
</protein>
<gene>
    <name evidence="3" type="primary">aoiO</name>
    <name type="ORF">AO090010000056</name>
</gene>
<organism>
    <name type="scientific">Aspergillus oryzae (strain ATCC 42149 / RIB 40)</name>
    <name type="common">Yellow koji mold</name>
    <dbReference type="NCBI Taxonomy" id="510516"/>
    <lineage>
        <taxon>Eukaryota</taxon>
        <taxon>Fungi</taxon>
        <taxon>Dikarya</taxon>
        <taxon>Ascomycota</taxon>
        <taxon>Pezizomycotina</taxon>
        <taxon>Eurotiomycetes</taxon>
        <taxon>Eurotiomycetidae</taxon>
        <taxon>Eurotiales</taxon>
        <taxon>Aspergillaceae</taxon>
        <taxon>Aspergillus</taxon>
        <taxon>Aspergillus subgen. Circumdati</taxon>
    </lineage>
</organism>
<reference key="1">
    <citation type="journal article" date="2005" name="Nature">
        <title>Genome sequencing and analysis of Aspergillus oryzae.</title>
        <authorList>
            <person name="Machida M."/>
            <person name="Asai K."/>
            <person name="Sano M."/>
            <person name="Tanaka T."/>
            <person name="Kumagai T."/>
            <person name="Terai G."/>
            <person name="Kusumoto K."/>
            <person name="Arima T."/>
            <person name="Akita O."/>
            <person name="Kashiwagi Y."/>
            <person name="Abe K."/>
            <person name="Gomi K."/>
            <person name="Horiuchi H."/>
            <person name="Kitamoto K."/>
            <person name="Kobayashi T."/>
            <person name="Takeuchi M."/>
            <person name="Denning D.W."/>
            <person name="Galagan J.E."/>
            <person name="Nierman W.C."/>
            <person name="Yu J."/>
            <person name="Archer D.B."/>
            <person name="Bennett J.W."/>
            <person name="Bhatnagar D."/>
            <person name="Cleveland T.E."/>
            <person name="Fedorova N.D."/>
            <person name="Gotoh O."/>
            <person name="Horikawa H."/>
            <person name="Hosoyama A."/>
            <person name="Ichinomiya M."/>
            <person name="Igarashi R."/>
            <person name="Iwashita K."/>
            <person name="Juvvadi P.R."/>
            <person name="Kato M."/>
            <person name="Kato Y."/>
            <person name="Kin T."/>
            <person name="Kokubun A."/>
            <person name="Maeda H."/>
            <person name="Maeyama N."/>
            <person name="Maruyama J."/>
            <person name="Nagasaki H."/>
            <person name="Nakajima T."/>
            <person name="Oda K."/>
            <person name="Okada K."/>
            <person name="Paulsen I."/>
            <person name="Sakamoto K."/>
            <person name="Sawano T."/>
            <person name="Takahashi M."/>
            <person name="Takase K."/>
            <person name="Terabayashi Y."/>
            <person name="Wortman J.R."/>
            <person name="Yamada O."/>
            <person name="Yamagata Y."/>
            <person name="Anazawa H."/>
            <person name="Hata Y."/>
            <person name="Koide Y."/>
            <person name="Komori T."/>
            <person name="Koyama Y."/>
            <person name="Minetoki T."/>
            <person name="Suharnan S."/>
            <person name="Tanaka A."/>
            <person name="Isono K."/>
            <person name="Kuhara S."/>
            <person name="Ogasawara N."/>
            <person name="Kikuchi H."/>
        </authorList>
    </citation>
    <scope>NUCLEOTIDE SEQUENCE [LARGE SCALE GENOMIC DNA]</scope>
    <source>
        <strain>ATCC 42149 / RIB 40</strain>
    </source>
</reference>
<reference key="2">
    <citation type="journal article" date="2012" name="ChemBioChem">
        <title>Overexpressing transcriptional regulator in Aspergillus oryzae activates a silent biosynthetic pathway to produce a novel polyketide.</title>
        <authorList>
            <person name="Nakazawa T."/>
            <person name="Ishiuchi K."/>
            <person name="Praseuth A."/>
            <person name="Noguchi H."/>
            <person name="Hotta K."/>
            <person name="Watanabe K."/>
        </authorList>
    </citation>
    <scope>FUNCTION</scope>
    <scope>INDUCTION</scope>
</reference>
<feature type="chain" id="PRO_0000462123" description="O-methyltransferase aoiO">
    <location>
        <begin position="1"/>
        <end position="398"/>
    </location>
</feature>
<feature type="active site" description="Proton acceptor" evidence="1">
    <location>
        <position position="299"/>
    </location>
</feature>
<feature type="binding site" evidence="1">
    <location>
        <position position="251"/>
    </location>
    <ligand>
        <name>S-adenosyl-L-methionine</name>
        <dbReference type="ChEBI" id="CHEBI:59789"/>
    </ligand>
</feature>
<comment type="function">
    <text evidence="2">O-methyltransferase; part of the gene cluster that mediates the biosynthesis of a methylated derivative of known natural products orthosporin and diaporthin (PubMed:22447538). Seems not to be involved in the biosynthesis of the identified final product of the pathway and its function has still to be determined (PubMed:22447538).</text>
</comment>
<comment type="induction">
    <text evidence="2">Expression not regulated by the cluster-specific transcription factor aoiH.</text>
</comment>
<comment type="similarity">
    <text evidence="1">Belongs to the class I-like SAM-binding methyltransferase superfamily. Cation-independent O-methyltransferase family.</text>
</comment>
<evidence type="ECO:0000255" key="1">
    <source>
        <dbReference type="PROSITE-ProRule" id="PRU01020"/>
    </source>
</evidence>
<evidence type="ECO:0000269" key="2">
    <source>
    </source>
</evidence>
<evidence type="ECO:0000303" key="3">
    <source>
    </source>
</evidence>